<organism>
    <name type="scientific">Staphylococcus aureus (strain NCTC 8325 / PS 47)</name>
    <dbReference type="NCBI Taxonomy" id="93061"/>
    <lineage>
        <taxon>Bacteria</taxon>
        <taxon>Bacillati</taxon>
        <taxon>Bacillota</taxon>
        <taxon>Bacilli</taxon>
        <taxon>Bacillales</taxon>
        <taxon>Staphylococcaceae</taxon>
        <taxon>Staphylococcus</taxon>
    </lineage>
</organism>
<sequence>MISVNDFKTGLTISVDNAIWKVIDFQHVKPGKGSAFVRSKLRNLRTGAIQEKTFRAGEKVEPAMIENRRMQYLYADGDNHVFMDNESFEQTELSSDYLKEELNYLKEGMEVQIQTYEGETIGVELPKTVELTVTETEPGIKGDTATGATKSATVETGYTLNVPLFVNEGDVLIINTGDGSYISRG</sequence>
<comment type="function">
    <text evidence="1">Involved in peptide bond synthesis. Stimulates efficient translation and peptide-bond synthesis on native or reconstituted 70S ribosomes in vitro. Probably functions indirectly by altering the affinity of the ribosome for aminoacyl-tRNA, thus increasing their reactivity as acceptors for peptidyl transferase.</text>
</comment>
<comment type="pathway">
    <text evidence="1">Protein biosynthesis; polypeptide chain elongation.</text>
</comment>
<comment type="subcellular location">
    <subcellularLocation>
        <location evidence="1">Cytoplasm</location>
    </subcellularLocation>
</comment>
<comment type="similarity">
    <text evidence="1">Belongs to the elongation factor P family.</text>
</comment>
<gene>
    <name evidence="1" type="primary">efp</name>
    <name type="ordered locus">SAOUHSC_01625</name>
</gene>
<dbReference type="EMBL" id="CP000253">
    <property type="protein sequence ID" value="ABD30703.1"/>
    <property type="molecule type" value="Genomic_DNA"/>
</dbReference>
<dbReference type="RefSeq" id="WP_000626504.1">
    <property type="nucleotide sequence ID" value="NZ_LS483365.1"/>
</dbReference>
<dbReference type="RefSeq" id="YP_500139.1">
    <property type="nucleotide sequence ID" value="NC_007795.1"/>
</dbReference>
<dbReference type="PDB" id="6RJI">
    <property type="method" value="X-ray"/>
    <property type="resolution" value="1.48 A"/>
    <property type="chains" value="A=1-185"/>
</dbReference>
<dbReference type="PDB" id="6RK3">
    <property type="method" value="NMR"/>
    <property type="chains" value="A=1-185"/>
</dbReference>
<dbReference type="PDBsum" id="6RJI"/>
<dbReference type="PDBsum" id="6RK3"/>
<dbReference type="BMRB" id="Q2FY41"/>
<dbReference type="SMR" id="Q2FY41"/>
<dbReference type="STRING" id="93061.SAOUHSC_01625"/>
<dbReference type="PaxDb" id="1280-SAXN108_1552"/>
<dbReference type="GeneID" id="3919963"/>
<dbReference type="KEGG" id="sao:SAOUHSC_01625"/>
<dbReference type="PATRIC" id="fig|93061.5.peg.1479"/>
<dbReference type="eggNOG" id="COG0231">
    <property type="taxonomic scope" value="Bacteria"/>
</dbReference>
<dbReference type="HOGENOM" id="CLU_074944_0_1_9"/>
<dbReference type="OrthoDB" id="9801844at2"/>
<dbReference type="UniPathway" id="UPA00345"/>
<dbReference type="PRO" id="PR:Q2FY41"/>
<dbReference type="Proteomes" id="UP000008816">
    <property type="component" value="Chromosome"/>
</dbReference>
<dbReference type="GO" id="GO:0005737">
    <property type="term" value="C:cytoplasm"/>
    <property type="evidence" value="ECO:0000318"/>
    <property type="project" value="GO_Central"/>
</dbReference>
<dbReference type="GO" id="GO:0003746">
    <property type="term" value="F:translation elongation factor activity"/>
    <property type="evidence" value="ECO:0000318"/>
    <property type="project" value="GO_Central"/>
</dbReference>
<dbReference type="GO" id="GO:0043043">
    <property type="term" value="P:peptide biosynthetic process"/>
    <property type="evidence" value="ECO:0007669"/>
    <property type="project" value="InterPro"/>
</dbReference>
<dbReference type="CDD" id="cd04470">
    <property type="entry name" value="S1_EF-P_repeat_1"/>
    <property type="match status" value="1"/>
</dbReference>
<dbReference type="CDD" id="cd05794">
    <property type="entry name" value="S1_EF-P_repeat_2"/>
    <property type="match status" value="1"/>
</dbReference>
<dbReference type="FunFam" id="2.30.30.30:FF:000010">
    <property type="entry name" value="Elongation factor P"/>
    <property type="match status" value="1"/>
</dbReference>
<dbReference type="FunFam" id="2.40.50.140:FF:000004">
    <property type="entry name" value="Elongation factor P"/>
    <property type="match status" value="1"/>
</dbReference>
<dbReference type="FunFam" id="2.40.50.140:FF:000009">
    <property type="entry name" value="Elongation factor P"/>
    <property type="match status" value="1"/>
</dbReference>
<dbReference type="Gene3D" id="2.30.30.30">
    <property type="match status" value="1"/>
</dbReference>
<dbReference type="Gene3D" id="2.40.50.140">
    <property type="entry name" value="Nucleic acid-binding proteins"/>
    <property type="match status" value="2"/>
</dbReference>
<dbReference type="HAMAP" id="MF_00141">
    <property type="entry name" value="EF_P"/>
    <property type="match status" value="1"/>
</dbReference>
<dbReference type="InterPro" id="IPR015365">
    <property type="entry name" value="Elong-fact-P_C"/>
</dbReference>
<dbReference type="InterPro" id="IPR012340">
    <property type="entry name" value="NA-bd_OB-fold"/>
</dbReference>
<dbReference type="InterPro" id="IPR014722">
    <property type="entry name" value="Rib_uL2_dom2"/>
</dbReference>
<dbReference type="InterPro" id="IPR020599">
    <property type="entry name" value="Transl_elong_fac_P/YeiP"/>
</dbReference>
<dbReference type="InterPro" id="IPR013185">
    <property type="entry name" value="Transl_elong_KOW-like"/>
</dbReference>
<dbReference type="InterPro" id="IPR001059">
    <property type="entry name" value="Transl_elong_P/YeiP_cen"/>
</dbReference>
<dbReference type="InterPro" id="IPR013852">
    <property type="entry name" value="Transl_elong_P/YeiP_CS"/>
</dbReference>
<dbReference type="InterPro" id="IPR011768">
    <property type="entry name" value="Transl_elongation_fac_P"/>
</dbReference>
<dbReference type="InterPro" id="IPR008991">
    <property type="entry name" value="Translation_prot_SH3-like_sf"/>
</dbReference>
<dbReference type="NCBIfam" id="TIGR00038">
    <property type="entry name" value="efp"/>
    <property type="match status" value="1"/>
</dbReference>
<dbReference type="NCBIfam" id="NF001810">
    <property type="entry name" value="PRK00529.1"/>
    <property type="match status" value="1"/>
</dbReference>
<dbReference type="PANTHER" id="PTHR30053">
    <property type="entry name" value="ELONGATION FACTOR P"/>
    <property type="match status" value="1"/>
</dbReference>
<dbReference type="PANTHER" id="PTHR30053:SF12">
    <property type="entry name" value="ELONGATION FACTOR P (EF-P) FAMILY PROTEIN"/>
    <property type="match status" value="1"/>
</dbReference>
<dbReference type="Pfam" id="PF01132">
    <property type="entry name" value="EFP"/>
    <property type="match status" value="1"/>
</dbReference>
<dbReference type="Pfam" id="PF08207">
    <property type="entry name" value="EFP_N"/>
    <property type="match status" value="1"/>
</dbReference>
<dbReference type="Pfam" id="PF09285">
    <property type="entry name" value="Elong-fact-P_C"/>
    <property type="match status" value="1"/>
</dbReference>
<dbReference type="PIRSF" id="PIRSF005901">
    <property type="entry name" value="EF-P"/>
    <property type="match status" value="1"/>
</dbReference>
<dbReference type="SMART" id="SM01185">
    <property type="entry name" value="EFP"/>
    <property type="match status" value="1"/>
</dbReference>
<dbReference type="SMART" id="SM00841">
    <property type="entry name" value="Elong-fact-P_C"/>
    <property type="match status" value="1"/>
</dbReference>
<dbReference type="SUPFAM" id="SSF50249">
    <property type="entry name" value="Nucleic acid-binding proteins"/>
    <property type="match status" value="2"/>
</dbReference>
<dbReference type="SUPFAM" id="SSF50104">
    <property type="entry name" value="Translation proteins SH3-like domain"/>
    <property type="match status" value="1"/>
</dbReference>
<dbReference type="PROSITE" id="PS01275">
    <property type="entry name" value="EFP"/>
    <property type="match status" value="1"/>
</dbReference>
<feature type="chain" id="PRO_1000010866" description="Elongation factor P">
    <location>
        <begin position="1"/>
        <end position="185"/>
    </location>
</feature>
<feature type="strand" evidence="2">
    <location>
        <begin position="12"/>
        <end position="15"/>
    </location>
</feature>
<feature type="strand" evidence="2">
    <location>
        <begin position="18"/>
        <end position="28"/>
    </location>
</feature>
<feature type="strand" evidence="2">
    <location>
        <begin position="31"/>
        <end position="34"/>
    </location>
</feature>
<feature type="strand" evidence="2">
    <location>
        <begin position="36"/>
        <end position="43"/>
    </location>
</feature>
<feature type="turn" evidence="2">
    <location>
        <begin position="44"/>
        <end position="46"/>
    </location>
</feature>
<feature type="strand" evidence="2">
    <location>
        <begin position="49"/>
        <end position="54"/>
    </location>
</feature>
<feature type="strand" evidence="2">
    <location>
        <begin position="60"/>
        <end position="62"/>
    </location>
</feature>
<feature type="strand" evidence="2">
    <location>
        <begin position="66"/>
        <end position="76"/>
    </location>
</feature>
<feature type="strand" evidence="2">
    <location>
        <begin position="79"/>
        <end position="84"/>
    </location>
</feature>
<feature type="turn" evidence="2">
    <location>
        <begin position="85"/>
        <end position="87"/>
    </location>
</feature>
<feature type="strand" evidence="2">
    <location>
        <begin position="90"/>
        <end position="94"/>
    </location>
</feature>
<feature type="turn" evidence="2">
    <location>
        <begin position="95"/>
        <end position="97"/>
    </location>
</feature>
<feature type="helix" evidence="2">
    <location>
        <begin position="101"/>
        <end position="103"/>
    </location>
</feature>
<feature type="strand" evidence="2">
    <location>
        <begin position="110"/>
        <end position="116"/>
    </location>
</feature>
<feature type="strand" evidence="2">
    <location>
        <begin position="119"/>
        <end position="124"/>
    </location>
</feature>
<feature type="strand" evidence="2">
    <location>
        <begin position="127"/>
        <end position="135"/>
    </location>
</feature>
<feature type="strand" evidence="2">
    <location>
        <begin position="149"/>
        <end position="154"/>
    </location>
</feature>
<feature type="strand" evidence="2">
    <location>
        <begin position="159"/>
        <end position="163"/>
    </location>
</feature>
<feature type="strand" evidence="2">
    <location>
        <begin position="171"/>
        <end position="175"/>
    </location>
</feature>
<feature type="turn" evidence="2">
    <location>
        <begin position="176"/>
        <end position="178"/>
    </location>
</feature>
<feature type="strand" evidence="2">
    <location>
        <begin position="181"/>
        <end position="184"/>
    </location>
</feature>
<reference key="1">
    <citation type="book" date="2006" name="Gram positive pathogens, 2nd edition">
        <title>The Staphylococcus aureus NCTC 8325 genome.</title>
        <editorList>
            <person name="Fischetti V."/>
            <person name="Novick R."/>
            <person name="Ferretti J."/>
            <person name="Portnoy D."/>
            <person name="Rood J."/>
        </editorList>
        <authorList>
            <person name="Gillaspy A.F."/>
            <person name="Worrell V."/>
            <person name="Orvis J."/>
            <person name="Roe B.A."/>
            <person name="Dyer D.W."/>
            <person name="Iandolo J.J."/>
        </authorList>
    </citation>
    <scope>NUCLEOTIDE SEQUENCE [LARGE SCALE GENOMIC DNA]</scope>
    <source>
        <strain>NCTC 8325 / PS 47</strain>
    </source>
</reference>
<name>EFP_STAA8</name>
<protein>
    <recommendedName>
        <fullName evidence="1">Elongation factor P</fullName>
        <shortName evidence="1">EF-P</shortName>
    </recommendedName>
</protein>
<keyword id="KW-0002">3D-structure</keyword>
<keyword id="KW-0963">Cytoplasm</keyword>
<keyword id="KW-0251">Elongation factor</keyword>
<keyword id="KW-0648">Protein biosynthesis</keyword>
<keyword id="KW-1185">Reference proteome</keyword>
<evidence type="ECO:0000255" key="1">
    <source>
        <dbReference type="HAMAP-Rule" id="MF_00141"/>
    </source>
</evidence>
<evidence type="ECO:0007829" key="2">
    <source>
        <dbReference type="PDB" id="6RJI"/>
    </source>
</evidence>
<accession>Q2FY41</accession>
<proteinExistence type="evidence at protein level"/>